<name>H2AJ_MACFA</name>
<feature type="initiator methionine" description="Removed" evidence="6">
    <location>
        <position position="1"/>
    </location>
</feature>
<feature type="chain" id="PRO_0000344248" description="Histone H2A.J">
    <location>
        <begin position="2"/>
        <end position="129"/>
    </location>
</feature>
<feature type="region of interest" description="Disordered" evidence="5">
    <location>
        <begin position="1"/>
        <end position="22"/>
    </location>
</feature>
<feature type="compositionally biased region" description="Basic residues" evidence="5">
    <location>
        <begin position="7"/>
        <end position="19"/>
    </location>
</feature>
<feature type="modified residue" description="N6-acetyllysine" evidence="3">
    <location>
        <position position="6"/>
    </location>
</feature>
<feature type="modified residue" description="N6-acetyllysine" evidence="3">
    <location>
        <position position="10"/>
    </location>
</feature>
<feature type="modified residue" description="N6-lactoyllysine; alternate" evidence="2">
    <location>
        <position position="10"/>
    </location>
</feature>
<feature type="modified residue" description="N5-methylglutamine" evidence="1">
    <location>
        <position position="105"/>
    </location>
</feature>
<feature type="modified residue" description="Phosphothreonine; by DCAF1" evidence="1">
    <location>
        <position position="121"/>
    </location>
</feature>
<reference key="1">
    <citation type="submission" date="2005-06" db="EMBL/GenBank/DDBJ databases">
        <title>DNA sequences of macaque genes expressed in brain or testis and its evolutionary implications.</title>
        <authorList>
            <consortium name="International consortium for macaque cDNA sequencing and analysis"/>
        </authorList>
    </citation>
    <scope>NUCLEOTIDE SEQUENCE [LARGE SCALE MRNA]</scope>
    <source>
        <tissue>Testis</tissue>
    </source>
</reference>
<organism>
    <name type="scientific">Macaca fascicularis</name>
    <name type="common">Crab-eating macaque</name>
    <name type="synonym">Cynomolgus monkey</name>
    <dbReference type="NCBI Taxonomy" id="9541"/>
    <lineage>
        <taxon>Eukaryota</taxon>
        <taxon>Metazoa</taxon>
        <taxon>Chordata</taxon>
        <taxon>Craniata</taxon>
        <taxon>Vertebrata</taxon>
        <taxon>Euteleostomi</taxon>
        <taxon>Mammalia</taxon>
        <taxon>Eutheria</taxon>
        <taxon>Euarchontoglires</taxon>
        <taxon>Primates</taxon>
        <taxon>Haplorrhini</taxon>
        <taxon>Catarrhini</taxon>
        <taxon>Cercopithecidae</taxon>
        <taxon>Cercopithecinae</taxon>
        <taxon>Macaca</taxon>
    </lineage>
</organism>
<comment type="function">
    <text>Core component of nucleosome. Nucleosomes wrap and compact DNA into chromatin, limiting DNA accessibility to the cellular machineries which require DNA as a template. Histones thereby play a central role in transcription regulation, DNA repair, DNA replication and chromosomal stability. DNA accessibility is regulated via a complex set of post-translational modifications of histones, also called histone code, and nucleosome remodeling.</text>
</comment>
<comment type="subunit">
    <text>The nucleosome is a histone octamer containing two molecules each of H2A, H2B, H3 and H4 assembled in one H3-H4 heterotetramer and two H2A-H2B heterodimers. The octamer wraps approximately 147 bp of DNA.</text>
</comment>
<comment type="subcellular location">
    <subcellularLocation>
        <location evidence="1">Nucleus</location>
    </subcellularLocation>
    <subcellularLocation>
        <location evidence="1">Chromosome</location>
    </subcellularLocation>
</comment>
<comment type="PTM">
    <text evidence="1">Monoubiquitination of Lys-120 (H2AXK119ub) gives a specific tag for epigenetic transcriptional repression. Following DNA double-strand breaks (DSBs), it is ubiquitinated through 'Lys-63' linkage of ubiquitin moieties (By similarity).</text>
</comment>
<comment type="PTM">
    <text evidence="1">Glutamine methylation at Gln-105 (H2AQ104me) by FBL is specifically dedicated to polymerase I. It is present at 35S ribosomal DNA locus and impairs binding of the FACT complex (By similarity).</text>
</comment>
<comment type="PTM">
    <text evidence="1">Phosphorylation on Ser-2 (H2AS1ph) is enhanced during mitosis. Phosphorylation on Ser-2 by RPS6KA5/MSK1 directly represses transcription. Acetylation of H3 inhibits Ser-2 phosphorylation by RPS6KA5/MSK1. Phosphorylation at Thr-121 (H2AT120ph) by DCAF1 is present in the regulatory region of many tumor suppresor genes and down-regulates their transcription (By similarity).</text>
</comment>
<comment type="similarity">
    <text evidence="6">Belongs to the histone H2A family.</text>
</comment>
<gene>
    <name evidence="4" type="primary">H2AJ</name>
    <name type="ORF">QtsA-13532</name>
</gene>
<keyword id="KW-0007">Acetylation</keyword>
<keyword id="KW-0158">Chromosome</keyword>
<keyword id="KW-0238">DNA-binding</keyword>
<keyword id="KW-1017">Isopeptide bond</keyword>
<keyword id="KW-0488">Methylation</keyword>
<keyword id="KW-0544">Nucleosome core</keyword>
<keyword id="KW-0539">Nucleus</keyword>
<keyword id="KW-0597">Phosphoprotein</keyword>
<keyword id="KW-1185">Reference proteome</keyword>
<keyword id="KW-0832">Ubl conjugation</keyword>
<proteinExistence type="evidence at transcript level"/>
<dbReference type="EMBL" id="AB179140">
    <property type="protein sequence ID" value="BAE02191.1"/>
    <property type="molecule type" value="mRNA"/>
</dbReference>
<dbReference type="SMR" id="Q4R3X5"/>
<dbReference type="STRING" id="9541.ENSMFAP00000011591"/>
<dbReference type="Ensembl" id="ENSMFAT00000100811.1">
    <property type="protein sequence ID" value="ENSMFAP00000047518.1"/>
    <property type="gene ID" value="ENSMFAG00000060261.1"/>
</dbReference>
<dbReference type="VEuPathDB" id="HostDB:ENSMFAG00000016754"/>
<dbReference type="eggNOG" id="KOG1756">
    <property type="taxonomic scope" value="Eukaryota"/>
</dbReference>
<dbReference type="GeneTree" id="ENSGT00940000153118"/>
<dbReference type="OMA" id="HNSETHE"/>
<dbReference type="Proteomes" id="UP000233100">
    <property type="component" value="Chromosome 11"/>
</dbReference>
<dbReference type="GO" id="GO:0000786">
    <property type="term" value="C:nucleosome"/>
    <property type="evidence" value="ECO:0007669"/>
    <property type="project" value="UniProtKB-KW"/>
</dbReference>
<dbReference type="GO" id="GO:0005634">
    <property type="term" value="C:nucleus"/>
    <property type="evidence" value="ECO:0007669"/>
    <property type="project" value="UniProtKB-SubCell"/>
</dbReference>
<dbReference type="GO" id="GO:0003677">
    <property type="term" value="F:DNA binding"/>
    <property type="evidence" value="ECO:0007669"/>
    <property type="project" value="UniProtKB-KW"/>
</dbReference>
<dbReference type="GO" id="GO:0046982">
    <property type="term" value="F:protein heterodimerization activity"/>
    <property type="evidence" value="ECO:0007669"/>
    <property type="project" value="InterPro"/>
</dbReference>
<dbReference type="GO" id="GO:0030527">
    <property type="term" value="F:structural constituent of chromatin"/>
    <property type="evidence" value="ECO:0007669"/>
    <property type="project" value="InterPro"/>
</dbReference>
<dbReference type="CDD" id="cd00074">
    <property type="entry name" value="HFD_H2A"/>
    <property type="match status" value="1"/>
</dbReference>
<dbReference type="FunFam" id="1.10.20.10:FF:000004">
    <property type="entry name" value="Histone H2A"/>
    <property type="match status" value="1"/>
</dbReference>
<dbReference type="Gene3D" id="1.10.20.10">
    <property type="entry name" value="Histone, subunit A"/>
    <property type="match status" value="1"/>
</dbReference>
<dbReference type="InterPro" id="IPR009072">
    <property type="entry name" value="Histone-fold"/>
</dbReference>
<dbReference type="InterPro" id="IPR002119">
    <property type="entry name" value="Histone_H2A"/>
</dbReference>
<dbReference type="InterPro" id="IPR007125">
    <property type="entry name" value="Histone_H2A/H2B/H3"/>
</dbReference>
<dbReference type="InterPro" id="IPR032454">
    <property type="entry name" value="Histone_H2A_C"/>
</dbReference>
<dbReference type="InterPro" id="IPR032458">
    <property type="entry name" value="Histone_H2A_CS"/>
</dbReference>
<dbReference type="PANTHER" id="PTHR23430">
    <property type="entry name" value="HISTONE H2A"/>
    <property type="match status" value="1"/>
</dbReference>
<dbReference type="Pfam" id="PF00125">
    <property type="entry name" value="Histone"/>
    <property type="match status" value="1"/>
</dbReference>
<dbReference type="Pfam" id="PF16211">
    <property type="entry name" value="Histone_H2A_C"/>
    <property type="match status" value="1"/>
</dbReference>
<dbReference type="PRINTS" id="PR00620">
    <property type="entry name" value="HISTONEH2A"/>
</dbReference>
<dbReference type="SMART" id="SM00414">
    <property type="entry name" value="H2A"/>
    <property type="match status" value="1"/>
</dbReference>
<dbReference type="SUPFAM" id="SSF47113">
    <property type="entry name" value="Histone-fold"/>
    <property type="match status" value="1"/>
</dbReference>
<dbReference type="PROSITE" id="PS00046">
    <property type="entry name" value="HISTONE_H2A"/>
    <property type="match status" value="1"/>
</dbReference>
<accession>Q4R3X5</accession>
<protein>
    <recommendedName>
        <fullName>Histone H2A.J</fullName>
        <shortName>H2a/j</shortName>
    </recommendedName>
</protein>
<evidence type="ECO:0000250" key="1"/>
<evidence type="ECO:0000250" key="2">
    <source>
        <dbReference type="UniProtKB" id="P0C0S5"/>
    </source>
</evidence>
<evidence type="ECO:0000250" key="3">
    <source>
        <dbReference type="UniProtKB" id="Q8R1M2"/>
    </source>
</evidence>
<evidence type="ECO:0000250" key="4">
    <source>
        <dbReference type="UniProtKB" id="Q9BTM1"/>
    </source>
</evidence>
<evidence type="ECO:0000256" key="5">
    <source>
        <dbReference type="SAM" id="MobiDB-lite"/>
    </source>
</evidence>
<evidence type="ECO:0000305" key="6"/>
<sequence length="129" mass="13989">MSGRGKQGGKVRAKAKSRSSRAGLQFPVGRVHRLLRKGNYAERVGAGAPVYLAAVLEYLTAEILELAGNAARDNKKTRIIPRHLQLAIRNDEELNKLLGKVTIAQGGVLPNIQAVLLPKKTESQKAKSK</sequence>